<organism>
    <name type="scientific">Dechloromonas aromatica (strain RCB)</name>
    <dbReference type="NCBI Taxonomy" id="159087"/>
    <lineage>
        <taxon>Bacteria</taxon>
        <taxon>Pseudomonadati</taxon>
        <taxon>Pseudomonadota</taxon>
        <taxon>Betaproteobacteria</taxon>
        <taxon>Rhodocyclales</taxon>
        <taxon>Azonexaceae</taxon>
        <taxon>Dechloromonas</taxon>
    </lineage>
</organism>
<dbReference type="EC" id="5.3.1.28" evidence="1"/>
<dbReference type="EMBL" id="CP000089">
    <property type="protein sequence ID" value="AAZ45258.1"/>
    <property type="molecule type" value="Genomic_DNA"/>
</dbReference>
<dbReference type="SMR" id="Q47IS3"/>
<dbReference type="STRING" id="159087.Daro_0501"/>
<dbReference type="KEGG" id="dar:Daro_0501"/>
<dbReference type="eggNOG" id="COG0279">
    <property type="taxonomic scope" value="Bacteria"/>
</dbReference>
<dbReference type="HOGENOM" id="CLU_080999_3_1_4"/>
<dbReference type="OrthoDB" id="9810929at2"/>
<dbReference type="UniPathway" id="UPA00041">
    <property type="reaction ID" value="UER00436"/>
</dbReference>
<dbReference type="GO" id="GO:0005737">
    <property type="term" value="C:cytoplasm"/>
    <property type="evidence" value="ECO:0007669"/>
    <property type="project" value="UniProtKB-SubCell"/>
</dbReference>
<dbReference type="GO" id="GO:0097367">
    <property type="term" value="F:carbohydrate derivative binding"/>
    <property type="evidence" value="ECO:0007669"/>
    <property type="project" value="InterPro"/>
</dbReference>
<dbReference type="GO" id="GO:0008968">
    <property type="term" value="F:D-sedoheptulose 7-phosphate isomerase activity"/>
    <property type="evidence" value="ECO:0007669"/>
    <property type="project" value="UniProtKB-UniRule"/>
</dbReference>
<dbReference type="GO" id="GO:0008270">
    <property type="term" value="F:zinc ion binding"/>
    <property type="evidence" value="ECO:0007669"/>
    <property type="project" value="UniProtKB-UniRule"/>
</dbReference>
<dbReference type="GO" id="GO:0005975">
    <property type="term" value="P:carbohydrate metabolic process"/>
    <property type="evidence" value="ECO:0007669"/>
    <property type="project" value="UniProtKB-UniRule"/>
</dbReference>
<dbReference type="GO" id="GO:2001061">
    <property type="term" value="P:D-glycero-D-manno-heptose 7-phosphate biosynthetic process"/>
    <property type="evidence" value="ECO:0007669"/>
    <property type="project" value="UniProtKB-UniPathway"/>
</dbReference>
<dbReference type="CDD" id="cd05006">
    <property type="entry name" value="SIS_GmhA"/>
    <property type="match status" value="1"/>
</dbReference>
<dbReference type="Gene3D" id="3.40.50.10490">
    <property type="entry name" value="Glucose-6-phosphate isomerase like protein, domain 1"/>
    <property type="match status" value="1"/>
</dbReference>
<dbReference type="HAMAP" id="MF_00067">
    <property type="entry name" value="GmhA"/>
    <property type="match status" value="1"/>
</dbReference>
<dbReference type="InterPro" id="IPR035461">
    <property type="entry name" value="GmhA/DiaA"/>
</dbReference>
<dbReference type="InterPro" id="IPR004515">
    <property type="entry name" value="Phosphoheptose_Isoase"/>
</dbReference>
<dbReference type="InterPro" id="IPR001347">
    <property type="entry name" value="SIS_dom"/>
</dbReference>
<dbReference type="InterPro" id="IPR046348">
    <property type="entry name" value="SIS_dom_sf"/>
</dbReference>
<dbReference type="InterPro" id="IPR050099">
    <property type="entry name" value="SIS_GmhA/DiaA_subfam"/>
</dbReference>
<dbReference type="NCBIfam" id="NF010546">
    <property type="entry name" value="PRK13936.1"/>
    <property type="match status" value="1"/>
</dbReference>
<dbReference type="PANTHER" id="PTHR30390:SF6">
    <property type="entry name" value="DNAA INITIATOR-ASSOCIATING PROTEIN DIAA"/>
    <property type="match status" value="1"/>
</dbReference>
<dbReference type="PANTHER" id="PTHR30390">
    <property type="entry name" value="SEDOHEPTULOSE 7-PHOSPHATE ISOMERASE / DNAA INITIATOR-ASSOCIATING FACTOR FOR REPLICATION INITIATION"/>
    <property type="match status" value="1"/>
</dbReference>
<dbReference type="Pfam" id="PF13580">
    <property type="entry name" value="SIS_2"/>
    <property type="match status" value="1"/>
</dbReference>
<dbReference type="SUPFAM" id="SSF53697">
    <property type="entry name" value="SIS domain"/>
    <property type="match status" value="1"/>
</dbReference>
<dbReference type="PROSITE" id="PS51464">
    <property type="entry name" value="SIS"/>
    <property type="match status" value="1"/>
</dbReference>
<accession>Q47IS3</accession>
<protein>
    <recommendedName>
        <fullName evidence="1">Phosphoheptose isomerase</fullName>
        <ecNumber evidence="1">5.3.1.28</ecNumber>
    </recommendedName>
    <alternativeName>
        <fullName evidence="1">Sedoheptulose 7-phosphate isomerase</fullName>
    </alternativeName>
</protein>
<proteinExistence type="inferred from homology"/>
<evidence type="ECO:0000255" key="1">
    <source>
        <dbReference type="HAMAP-Rule" id="MF_00067"/>
    </source>
</evidence>
<comment type="function">
    <text evidence="1">Catalyzes the isomerization of sedoheptulose 7-phosphate in D-glycero-D-manno-heptose 7-phosphate.</text>
</comment>
<comment type="catalytic activity">
    <reaction evidence="1">
        <text>2 D-sedoheptulose 7-phosphate = D-glycero-alpha-D-manno-heptose 7-phosphate + D-glycero-beta-D-manno-heptose 7-phosphate</text>
        <dbReference type="Rhea" id="RHEA:27489"/>
        <dbReference type="ChEBI" id="CHEBI:57483"/>
        <dbReference type="ChEBI" id="CHEBI:60203"/>
        <dbReference type="ChEBI" id="CHEBI:60204"/>
        <dbReference type="EC" id="5.3.1.28"/>
    </reaction>
</comment>
<comment type="cofactor">
    <cofactor evidence="1">
        <name>Zn(2+)</name>
        <dbReference type="ChEBI" id="CHEBI:29105"/>
    </cofactor>
    <text evidence="1">Binds 1 zinc ion per subunit.</text>
</comment>
<comment type="pathway">
    <text evidence="1">Carbohydrate biosynthesis; D-glycero-D-manno-heptose 7-phosphate biosynthesis; D-glycero-alpha-D-manno-heptose 7-phosphate and D-glycero-beta-D-manno-heptose 7-phosphate from sedoheptulose 7-phosphate: step 1/1.</text>
</comment>
<comment type="subunit">
    <text evidence="1">Homotetramer.</text>
</comment>
<comment type="subcellular location">
    <subcellularLocation>
        <location evidence="1">Cytoplasm</location>
    </subcellularLocation>
</comment>
<comment type="miscellaneous">
    <text evidence="1">The reaction produces a racemic mixture of D-glycero-alpha-D-manno-heptose 7-phosphate and D-glycero-beta-D-manno-heptose 7-phosphate.</text>
</comment>
<comment type="similarity">
    <text evidence="1">Belongs to the SIS family. GmhA subfamily.</text>
</comment>
<feature type="chain" id="PRO_1000009061" description="Phosphoheptose isomerase">
    <location>
        <begin position="1"/>
        <end position="196"/>
    </location>
</feature>
<feature type="domain" description="SIS" evidence="1">
    <location>
        <begin position="36"/>
        <end position="196"/>
    </location>
</feature>
<feature type="binding site" evidence="1">
    <location>
        <begin position="51"/>
        <end position="53"/>
    </location>
    <ligand>
        <name>substrate</name>
    </ligand>
</feature>
<feature type="binding site" evidence="1">
    <location>
        <position position="60"/>
    </location>
    <ligand>
        <name>Zn(2+)</name>
        <dbReference type="ChEBI" id="CHEBI:29105"/>
    </ligand>
</feature>
<feature type="binding site" evidence="1">
    <location>
        <position position="64"/>
    </location>
    <ligand>
        <name>substrate</name>
    </ligand>
</feature>
<feature type="binding site" evidence="1">
    <location>
        <position position="64"/>
    </location>
    <ligand>
        <name>Zn(2+)</name>
        <dbReference type="ChEBI" id="CHEBI:29105"/>
    </ligand>
</feature>
<feature type="binding site" evidence="1">
    <location>
        <begin position="93"/>
        <end position="94"/>
    </location>
    <ligand>
        <name>substrate</name>
    </ligand>
</feature>
<feature type="binding site" evidence="1">
    <location>
        <begin position="119"/>
        <end position="121"/>
    </location>
    <ligand>
        <name>substrate</name>
    </ligand>
</feature>
<feature type="binding site" evidence="1">
    <location>
        <position position="124"/>
    </location>
    <ligand>
        <name>substrate</name>
    </ligand>
</feature>
<feature type="binding site" evidence="1">
    <location>
        <position position="174"/>
    </location>
    <ligand>
        <name>substrate</name>
    </ligand>
</feature>
<feature type="binding site" evidence="1">
    <location>
        <position position="174"/>
    </location>
    <ligand>
        <name>Zn(2+)</name>
        <dbReference type="ChEBI" id="CHEBI:29105"/>
    </ligand>
</feature>
<feature type="binding site" evidence="1">
    <location>
        <position position="182"/>
    </location>
    <ligand>
        <name>Zn(2+)</name>
        <dbReference type="ChEBI" id="CHEBI:29105"/>
    </ligand>
</feature>
<reference key="1">
    <citation type="journal article" date="2009" name="BMC Genomics">
        <title>Metabolic analysis of the soil microbe Dechloromonas aromatica str. RCB: indications of a surprisingly complex life-style and cryptic anaerobic pathways for aromatic degradation.</title>
        <authorList>
            <person name="Salinero K.K."/>
            <person name="Keller K."/>
            <person name="Feil W.S."/>
            <person name="Feil H."/>
            <person name="Trong S."/>
            <person name="Di Bartolo G."/>
            <person name="Lapidus A."/>
        </authorList>
    </citation>
    <scope>NUCLEOTIDE SEQUENCE [LARGE SCALE GENOMIC DNA]</scope>
    <source>
        <strain>RCB</strain>
    </source>
</reference>
<sequence>MDLIARVAKNFEDSAQTKLNAVDMMAAPIAAAIETMTNCLINGGKILACGNGGSAGDSQHFAAELIGRFEAERQELAAIALTTDSSILTAIGNDYSFNQIFSKQVRGLGHSGDILLAISTSGNSGNIIEAIKAAHEHDMHVIALTGKGGGQIGEMLRDADIHLCVPADRTARIQETHLLVIHCLCDGIDALLLGVE</sequence>
<keyword id="KW-0119">Carbohydrate metabolism</keyword>
<keyword id="KW-0963">Cytoplasm</keyword>
<keyword id="KW-0413">Isomerase</keyword>
<keyword id="KW-0479">Metal-binding</keyword>
<keyword id="KW-0862">Zinc</keyword>
<gene>
    <name evidence="1" type="primary">gmhA</name>
    <name type="ordered locus">Daro_0501</name>
</gene>
<name>GMHA_DECAR</name>